<name>DTXR_CORJK</name>
<protein>
    <recommendedName>
        <fullName>Diphtheria toxin repressor</fullName>
    </recommendedName>
    <alternativeName>
        <fullName>Iron-dependent diphtheria tox regulatory element</fullName>
    </alternativeName>
    <alternativeName>
        <fullName>Tox regulatory factor</fullName>
    </alternativeName>
</protein>
<feature type="chain" id="PRO_0000223185" description="Diphtheria toxin repressor">
    <location>
        <begin position="1"/>
        <end position="240"/>
    </location>
</feature>
<feature type="domain" description="HTH dtxR-type" evidence="2">
    <location>
        <begin position="1"/>
        <end position="65"/>
    </location>
</feature>
<sequence length="240" mass="26964">MRDLVDTTEMYLRTIYELEEEGIPPLRARIAERLDQSGPTVSQTVARMERDELLTVEKDRSLKLSAQGRALATAVMRKHRLAERLLTDVIGLPWEKVHDEACRWEHVMGDEVEVQLVKVLSEYATSPFGNPIPGLDELMEGIPDSERAELQQKIDNLQVVTSQRASDIEPPEPIQVKILSINEIIQVEHKLMAKFHALGMRPGSVVDLVATEDGLEFSNDNGAMVVPEELGHAVRVEKVN</sequence>
<proteinExistence type="inferred from homology"/>
<reference key="1">
    <citation type="journal article" date="2005" name="J. Bacteriol.">
        <title>Complete genome sequence and analysis of the multiresistant nosocomial pathogen Corynebacterium jeikeium K411, a lipid-requiring bacterium of the human skin flora.</title>
        <authorList>
            <person name="Tauch A."/>
            <person name="Kaiser O."/>
            <person name="Hain T."/>
            <person name="Goesmann A."/>
            <person name="Weisshaar B."/>
            <person name="Albersmeier A."/>
            <person name="Bekel T."/>
            <person name="Bischoff N."/>
            <person name="Brune I."/>
            <person name="Chakraborty T."/>
            <person name="Kalinowski J."/>
            <person name="Meyer F."/>
            <person name="Rupp O."/>
            <person name="Schneiker S."/>
            <person name="Viehoever P."/>
            <person name="Puehler A."/>
        </authorList>
    </citation>
    <scope>NUCLEOTIDE SEQUENCE [LARGE SCALE GENOMIC DNA]</scope>
    <source>
        <strain>K411</strain>
    </source>
</reference>
<gene>
    <name type="primary">dtxR</name>
    <name type="ordered locus">jk1097</name>
</gene>
<organism>
    <name type="scientific">Corynebacterium jeikeium (strain K411)</name>
    <dbReference type="NCBI Taxonomy" id="306537"/>
    <lineage>
        <taxon>Bacteria</taxon>
        <taxon>Bacillati</taxon>
        <taxon>Actinomycetota</taxon>
        <taxon>Actinomycetes</taxon>
        <taxon>Mycobacteriales</taxon>
        <taxon>Corynebacteriaceae</taxon>
        <taxon>Corynebacterium</taxon>
    </lineage>
</organism>
<comment type="function">
    <text evidence="1">Iron-binding repressor of the dipheteria toxin gene expression. May serve as a global regulator of gene expression (By similarity).</text>
</comment>
<comment type="subunit">
    <text evidence="1">Homodimer.</text>
</comment>
<comment type="subcellular location">
    <subcellularLocation>
        <location evidence="1">Cytoplasm</location>
    </subcellularLocation>
</comment>
<comment type="similarity">
    <text evidence="3">Belongs to the DtxR/MntR family.</text>
</comment>
<dbReference type="EMBL" id="CR931997">
    <property type="protein sequence ID" value="CAI37261.1"/>
    <property type="molecule type" value="Genomic_DNA"/>
</dbReference>
<dbReference type="RefSeq" id="WP_011273648.1">
    <property type="nucleotide sequence ID" value="NC_007164.1"/>
</dbReference>
<dbReference type="SMR" id="Q4JV96"/>
<dbReference type="STRING" id="306537.jk1097"/>
<dbReference type="KEGG" id="cjk:jk1097"/>
<dbReference type="PATRIC" id="fig|306537.10.peg.1110"/>
<dbReference type="eggNOG" id="COG1321">
    <property type="taxonomic scope" value="Bacteria"/>
</dbReference>
<dbReference type="HOGENOM" id="CLU_069532_0_0_11"/>
<dbReference type="OrthoDB" id="3208141at2"/>
<dbReference type="Proteomes" id="UP000000545">
    <property type="component" value="Chromosome"/>
</dbReference>
<dbReference type="GO" id="GO:0005737">
    <property type="term" value="C:cytoplasm"/>
    <property type="evidence" value="ECO:0007669"/>
    <property type="project" value="UniProtKB-SubCell"/>
</dbReference>
<dbReference type="GO" id="GO:0003677">
    <property type="term" value="F:DNA binding"/>
    <property type="evidence" value="ECO:0007669"/>
    <property type="project" value="UniProtKB-KW"/>
</dbReference>
<dbReference type="GO" id="GO:0003700">
    <property type="term" value="F:DNA-binding transcription factor activity"/>
    <property type="evidence" value="ECO:0007669"/>
    <property type="project" value="InterPro"/>
</dbReference>
<dbReference type="GO" id="GO:0046983">
    <property type="term" value="F:protein dimerization activity"/>
    <property type="evidence" value="ECO:0007669"/>
    <property type="project" value="InterPro"/>
</dbReference>
<dbReference type="GO" id="GO:0046914">
    <property type="term" value="F:transition metal ion binding"/>
    <property type="evidence" value="ECO:0007669"/>
    <property type="project" value="InterPro"/>
</dbReference>
<dbReference type="GO" id="GO:0045892">
    <property type="term" value="P:negative regulation of DNA-templated transcription"/>
    <property type="evidence" value="ECO:0007669"/>
    <property type="project" value="TreeGrafter"/>
</dbReference>
<dbReference type="FunFam" id="1.10.60.10:FF:000001">
    <property type="entry name" value="Iron dependent repressor"/>
    <property type="match status" value="1"/>
</dbReference>
<dbReference type="Gene3D" id="2.30.30.90">
    <property type="match status" value="1"/>
</dbReference>
<dbReference type="Gene3D" id="1.10.60.10">
    <property type="entry name" value="Iron dependent repressor, metal binding and dimerisation domain"/>
    <property type="match status" value="1"/>
</dbReference>
<dbReference type="Gene3D" id="1.10.10.10">
    <property type="entry name" value="Winged helix-like DNA-binding domain superfamily/Winged helix DNA-binding domain"/>
    <property type="match status" value="1"/>
</dbReference>
<dbReference type="InterPro" id="IPR040767">
    <property type="entry name" value="DtxR/IdeR_SH3"/>
</dbReference>
<dbReference type="InterPro" id="IPR050536">
    <property type="entry name" value="DtxR_MntR_Metal-Reg"/>
</dbReference>
<dbReference type="InterPro" id="IPR001367">
    <property type="entry name" value="Fe_dep_repressor"/>
</dbReference>
<dbReference type="InterPro" id="IPR036421">
    <property type="entry name" value="Fe_dep_repressor_sf"/>
</dbReference>
<dbReference type="InterPro" id="IPR038157">
    <property type="entry name" value="FeoA_core_dom"/>
</dbReference>
<dbReference type="InterPro" id="IPR022687">
    <property type="entry name" value="HTH_DTXR"/>
</dbReference>
<dbReference type="InterPro" id="IPR022689">
    <property type="entry name" value="Iron_dep_repressor"/>
</dbReference>
<dbReference type="InterPro" id="IPR008988">
    <property type="entry name" value="Transcriptional_repressor_C"/>
</dbReference>
<dbReference type="InterPro" id="IPR036388">
    <property type="entry name" value="WH-like_DNA-bd_sf"/>
</dbReference>
<dbReference type="InterPro" id="IPR036390">
    <property type="entry name" value="WH_DNA-bd_sf"/>
</dbReference>
<dbReference type="PANTHER" id="PTHR33238">
    <property type="entry name" value="IRON (METAL) DEPENDENT REPRESSOR, DTXR FAMILY"/>
    <property type="match status" value="1"/>
</dbReference>
<dbReference type="PANTHER" id="PTHR33238:SF10">
    <property type="entry name" value="IRON-DEPENDENT REPRESSOR IDER"/>
    <property type="match status" value="1"/>
</dbReference>
<dbReference type="Pfam" id="PF18357">
    <property type="entry name" value="DtxR"/>
    <property type="match status" value="1"/>
</dbReference>
<dbReference type="Pfam" id="PF02742">
    <property type="entry name" value="Fe_dep_repr_C"/>
    <property type="match status" value="1"/>
</dbReference>
<dbReference type="Pfam" id="PF01325">
    <property type="entry name" value="Fe_dep_repress"/>
    <property type="match status" value="1"/>
</dbReference>
<dbReference type="SMART" id="SM00529">
    <property type="entry name" value="HTH_DTXR"/>
    <property type="match status" value="1"/>
</dbReference>
<dbReference type="SUPFAM" id="SSF50037">
    <property type="entry name" value="C-terminal domain of transcriptional repressors"/>
    <property type="match status" value="1"/>
</dbReference>
<dbReference type="SUPFAM" id="SSF47979">
    <property type="entry name" value="Iron-dependent repressor protein, dimerization domain"/>
    <property type="match status" value="1"/>
</dbReference>
<dbReference type="SUPFAM" id="SSF46785">
    <property type="entry name" value="Winged helix' DNA-binding domain"/>
    <property type="match status" value="1"/>
</dbReference>
<dbReference type="PROSITE" id="PS50944">
    <property type="entry name" value="HTH_DTXR"/>
    <property type="match status" value="1"/>
</dbReference>
<accession>Q4JV96</accession>
<evidence type="ECO:0000250" key="1"/>
<evidence type="ECO:0000255" key="2">
    <source>
        <dbReference type="PROSITE-ProRule" id="PRU00296"/>
    </source>
</evidence>
<evidence type="ECO:0000305" key="3"/>
<keyword id="KW-0963">Cytoplasm</keyword>
<keyword id="KW-0238">DNA-binding</keyword>
<keyword id="KW-0408">Iron</keyword>
<keyword id="KW-1185">Reference proteome</keyword>
<keyword id="KW-0678">Repressor</keyword>
<keyword id="KW-0804">Transcription</keyword>
<keyword id="KW-0805">Transcription regulation</keyword>